<comment type="function">
    <text evidence="1">Bifunctional enzyme which can phosphorylate or dephosphorylate isocitrate dehydrogenase (IDH) on a specific serine residue. This is a regulatory mechanism which enables bacteria to bypass the Krebs cycle via the glyoxylate shunt in response to the source of carbon. When bacteria are grown on glucose, IDH is fully active and unphosphorylated, but when grown on acetate or ethanol, the activity of IDH declines drastically concomitant with its phosphorylation.</text>
</comment>
<comment type="catalytic activity">
    <reaction evidence="1">
        <text>L-seryl-[isocitrate dehydrogenase] + ATP = O-phospho-L-seryl-[isocitrate dehydrogenase] + ADP + H(+)</text>
        <dbReference type="Rhea" id="RHEA:43540"/>
        <dbReference type="Rhea" id="RHEA-COMP:10605"/>
        <dbReference type="Rhea" id="RHEA-COMP:10606"/>
        <dbReference type="ChEBI" id="CHEBI:15378"/>
        <dbReference type="ChEBI" id="CHEBI:29999"/>
        <dbReference type="ChEBI" id="CHEBI:30616"/>
        <dbReference type="ChEBI" id="CHEBI:83421"/>
        <dbReference type="ChEBI" id="CHEBI:456216"/>
        <dbReference type="EC" id="2.7.11.5"/>
    </reaction>
</comment>
<comment type="subcellular location">
    <subcellularLocation>
        <location evidence="1">Cytoplasm</location>
    </subcellularLocation>
</comment>
<comment type="similarity">
    <text evidence="1">Belongs to the AceK family.</text>
</comment>
<comment type="sequence caution" evidence="2">
    <conflict type="erroneous initiation">
        <sequence resource="EMBL-CDS" id="ABP80125"/>
    </conflict>
</comment>
<feature type="chain" id="PRO_0000315271" description="Isocitrate dehydrogenase kinase/phosphatase">
    <location>
        <begin position="1"/>
        <end position="573"/>
    </location>
</feature>
<feature type="active site" evidence="1">
    <location>
        <position position="374"/>
    </location>
</feature>
<feature type="binding site" evidence="1">
    <location>
        <begin position="318"/>
        <end position="324"/>
    </location>
    <ligand>
        <name>ATP</name>
        <dbReference type="ChEBI" id="CHEBI:30616"/>
    </ligand>
</feature>
<feature type="binding site" evidence="1">
    <location>
        <position position="339"/>
    </location>
    <ligand>
        <name>ATP</name>
        <dbReference type="ChEBI" id="CHEBI:30616"/>
    </ligand>
</feature>
<dbReference type="EC" id="2.7.11.5" evidence="1"/>
<dbReference type="EC" id="3.1.3.-" evidence="1"/>
<dbReference type="EMBL" id="CP000304">
    <property type="protein sequence ID" value="ABP80125.1"/>
    <property type="status" value="ALT_INIT"/>
    <property type="molecule type" value="Genomic_DNA"/>
</dbReference>
<dbReference type="RefSeq" id="WP_013983082.1">
    <property type="nucleotide sequence ID" value="NC_009434.1"/>
</dbReference>
<dbReference type="SMR" id="A4VMC4"/>
<dbReference type="KEGG" id="psa:PST_2473"/>
<dbReference type="eggNOG" id="COG4579">
    <property type="taxonomic scope" value="Bacteria"/>
</dbReference>
<dbReference type="HOGENOM" id="CLU_033804_1_1_6"/>
<dbReference type="Proteomes" id="UP000000233">
    <property type="component" value="Chromosome"/>
</dbReference>
<dbReference type="GO" id="GO:0005737">
    <property type="term" value="C:cytoplasm"/>
    <property type="evidence" value="ECO:0007669"/>
    <property type="project" value="UniProtKB-SubCell"/>
</dbReference>
<dbReference type="GO" id="GO:0008772">
    <property type="term" value="F:[isocitrate dehydrogenase (NADP+)] kinase activity"/>
    <property type="evidence" value="ECO:0007669"/>
    <property type="project" value="UniProtKB-UniRule"/>
</dbReference>
<dbReference type="GO" id="GO:0016208">
    <property type="term" value="F:AMP binding"/>
    <property type="evidence" value="ECO:0007669"/>
    <property type="project" value="TreeGrafter"/>
</dbReference>
<dbReference type="GO" id="GO:0005524">
    <property type="term" value="F:ATP binding"/>
    <property type="evidence" value="ECO:0007669"/>
    <property type="project" value="UniProtKB-UniRule"/>
</dbReference>
<dbReference type="GO" id="GO:0004721">
    <property type="term" value="F:phosphoprotein phosphatase activity"/>
    <property type="evidence" value="ECO:0007669"/>
    <property type="project" value="UniProtKB-KW"/>
</dbReference>
<dbReference type="GO" id="GO:0004674">
    <property type="term" value="F:protein serine/threonine kinase activity"/>
    <property type="evidence" value="ECO:0007669"/>
    <property type="project" value="UniProtKB-KW"/>
</dbReference>
<dbReference type="GO" id="GO:0006006">
    <property type="term" value="P:glucose metabolic process"/>
    <property type="evidence" value="ECO:0007669"/>
    <property type="project" value="InterPro"/>
</dbReference>
<dbReference type="GO" id="GO:0006097">
    <property type="term" value="P:glyoxylate cycle"/>
    <property type="evidence" value="ECO:0007669"/>
    <property type="project" value="UniProtKB-UniRule"/>
</dbReference>
<dbReference type="GO" id="GO:0006099">
    <property type="term" value="P:tricarboxylic acid cycle"/>
    <property type="evidence" value="ECO:0007669"/>
    <property type="project" value="UniProtKB-UniRule"/>
</dbReference>
<dbReference type="HAMAP" id="MF_00747">
    <property type="entry name" value="AceK"/>
    <property type="match status" value="1"/>
</dbReference>
<dbReference type="InterPro" id="IPR046855">
    <property type="entry name" value="AceK_kinase"/>
</dbReference>
<dbReference type="InterPro" id="IPR046854">
    <property type="entry name" value="AceK_regulatory"/>
</dbReference>
<dbReference type="InterPro" id="IPR010452">
    <property type="entry name" value="Isocitrate_DH_AceK"/>
</dbReference>
<dbReference type="NCBIfam" id="NF002804">
    <property type="entry name" value="PRK02946.1"/>
    <property type="match status" value="1"/>
</dbReference>
<dbReference type="PANTHER" id="PTHR39559">
    <property type="match status" value="1"/>
</dbReference>
<dbReference type="PANTHER" id="PTHR39559:SF1">
    <property type="entry name" value="ISOCITRATE DEHYDROGENASE KINASE_PHOSPHATASE"/>
    <property type="match status" value="1"/>
</dbReference>
<dbReference type="Pfam" id="PF06315">
    <property type="entry name" value="AceK_kinase"/>
    <property type="match status" value="1"/>
</dbReference>
<dbReference type="Pfam" id="PF20423">
    <property type="entry name" value="AceK_regulatory"/>
    <property type="match status" value="1"/>
</dbReference>
<dbReference type="PIRSF" id="PIRSF000719">
    <property type="entry name" value="AceK"/>
    <property type="match status" value="1"/>
</dbReference>
<keyword id="KW-0067">ATP-binding</keyword>
<keyword id="KW-0963">Cytoplasm</keyword>
<keyword id="KW-0329">Glyoxylate bypass</keyword>
<keyword id="KW-0378">Hydrolase</keyword>
<keyword id="KW-0418">Kinase</keyword>
<keyword id="KW-0547">Nucleotide-binding</keyword>
<keyword id="KW-0904">Protein phosphatase</keyword>
<keyword id="KW-1185">Reference proteome</keyword>
<keyword id="KW-0723">Serine/threonine-protein kinase</keyword>
<keyword id="KW-0808">Transferase</keyword>
<keyword id="KW-0816">Tricarboxylic acid cycle</keyword>
<accession>A4VMC4</accession>
<protein>
    <recommendedName>
        <fullName evidence="1">Isocitrate dehydrogenase kinase/phosphatase</fullName>
        <shortName evidence="1">IDH kinase/phosphatase</shortName>
        <shortName evidence="1">IDHK/P</shortName>
        <ecNumber evidence="1">2.7.11.5</ecNumber>
        <ecNumber evidence="1">3.1.3.-</ecNumber>
    </recommendedName>
</protein>
<evidence type="ECO:0000255" key="1">
    <source>
        <dbReference type="HAMAP-Rule" id="MF_00747"/>
    </source>
</evidence>
<evidence type="ECO:0000305" key="2"/>
<proteinExistence type="inferred from homology"/>
<organism>
    <name type="scientific">Stutzerimonas stutzeri (strain A1501)</name>
    <name type="common">Pseudomonas stutzeri</name>
    <dbReference type="NCBI Taxonomy" id="379731"/>
    <lineage>
        <taxon>Bacteria</taxon>
        <taxon>Pseudomonadati</taxon>
        <taxon>Pseudomonadota</taxon>
        <taxon>Gammaproteobacteria</taxon>
        <taxon>Pseudomonadales</taxon>
        <taxon>Pseudomonadaceae</taxon>
        <taxon>Stutzerimonas</taxon>
    </lineage>
</organism>
<name>ACEK_STUS1</name>
<sequence>MVQHELAAEIARQILLGFDDYREHFRLITEGARARFEQAQWQEAQRASAARISLYEEKVGETRRRLLASFDHADLLQVEAWPQIKSAYIELINPRFDDELSETWYNSIFCGLFSHDCISDGTMFIHTTRPAVRAHERLAQTRRYRPNGDLRGMLEQILRDYAFSVPYCDLPGDLQRLQTQLCETLPDWVCKDPELTVEVFVSVLYRNKGAYLIGRIFTCDEQWPLAIPLLHRDGQGIVADALITDEAEVSIIFSFTRSYFMVEVPIPAEFVGFLKRILPGKHIAELYSSIGFYKHGKSEFYRALIDHLANTDDRFVMAPGVRGMVMTVFTLPGFNTVFKLIKDRFSPIKSVNRANVIEKYRLVKSVDRVGRMADTQEFADFRFPKAKFEPECLAELLEVAPSTVEVQGDTVLVRHCWTERRMTPLNLYLENASEQQVREALEDYGLAIKQLAAANIFPGDMLLKNFGVTRHGRVVFYDYDEISFLTEVNFRHIPPPRYPEDEMASEPWYSVGPNDVFPEEFPRFLFADLGQRRLFASLHGELYDADYWKGLQDAIRQGKVIDVFPYRRKADRN</sequence>
<gene>
    <name evidence="1" type="primary">aceK</name>
    <name type="ordered locus">PST_2473</name>
</gene>
<reference key="1">
    <citation type="journal article" date="2008" name="Proc. Natl. Acad. Sci. U.S.A.">
        <title>Nitrogen fixation island and rhizosphere competence traits in the genome of root-associated Pseudomonas stutzeri A1501.</title>
        <authorList>
            <person name="Yan Y."/>
            <person name="Yang J."/>
            <person name="Dou Y."/>
            <person name="Chen M."/>
            <person name="Ping S."/>
            <person name="Peng J."/>
            <person name="Lu W."/>
            <person name="Zhang W."/>
            <person name="Yao Z."/>
            <person name="Li H."/>
            <person name="Liu W."/>
            <person name="He S."/>
            <person name="Geng L."/>
            <person name="Zhang X."/>
            <person name="Yang F."/>
            <person name="Yu H."/>
            <person name="Zhan Y."/>
            <person name="Li D."/>
            <person name="Lin Z."/>
            <person name="Wang Y."/>
            <person name="Elmerich C."/>
            <person name="Lin M."/>
            <person name="Jin Q."/>
        </authorList>
    </citation>
    <scope>NUCLEOTIDE SEQUENCE [LARGE SCALE GENOMIC DNA]</scope>
    <source>
        <strain>A1501</strain>
    </source>
</reference>